<reference key="1">
    <citation type="journal article" date="2000" name="Physiol. Mol. Plant Pathol.">
        <title>Evidence for a role of cutinase in pathogenicity of Pyrenopeziza brassicae on brassicas.</title>
        <authorList>
            <person name="Davies K.A."/>
            <person name="De Lorono I."/>
            <person name="Foster S.J."/>
            <person name="Li D."/>
            <person name="Johnstone K."/>
            <person name="Ashby A.M."/>
        </authorList>
    </citation>
    <scope>NUCLEOTIDE SEQUENCE [GENOMIC DNA]</scope>
    <scope>FUNCTION</scope>
    <scope>INDUCTION</scope>
    <source>
        <strain evidence="8">JH26</strain>
    </source>
</reference>
<reference key="2">
    <citation type="journal article" date="2003" name="Mol. Plant Microbe Interact.">
        <title>Molecular evidence that the extracellular cutinase Pbc1 is required for pathogenicity of Pyrenopeziza brassicae on oilseed rape.</title>
        <authorList>
            <person name="Li D."/>
            <person name="Ashby A.M."/>
            <person name="Johnstone K."/>
        </authorList>
    </citation>
    <scope>FUNCTION</scope>
    <scope>CATALYTIC ACTIVITY</scope>
    <scope>INDUCTION</scope>
    <scope>DISRUPTION PHENOTYPE</scope>
    <source>
        <strain evidence="7">NH10</strain>
    </source>
</reference>
<protein>
    <recommendedName>
        <fullName evidence="8">Cutinase pbc1</fullName>
        <ecNumber evidence="10">3.1.1.74</ecNumber>
    </recommendedName>
    <alternativeName>
        <fullName>Cutin hydrolase</fullName>
    </alternativeName>
</protein>
<accession>Q9Y7G8</accession>
<dbReference type="EC" id="3.1.1.74" evidence="10"/>
<dbReference type="EMBL" id="AJ009953">
    <property type="protein sequence ID" value="CAB40372.1"/>
    <property type="molecule type" value="Genomic_DNA"/>
</dbReference>
<dbReference type="SMR" id="Q9Y7G8"/>
<dbReference type="ESTHER" id="pyrbr-Q9Y7G8">
    <property type="family name" value="Cutinase"/>
</dbReference>
<dbReference type="BRENDA" id="3.1.1.74">
    <property type="organism ID" value="13817"/>
</dbReference>
<dbReference type="PHI-base" id="PHI:407"/>
<dbReference type="GO" id="GO:0005576">
    <property type="term" value="C:extracellular region"/>
    <property type="evidence" value="ECO:0007669"/>
    <property type="project" value="UniProtKB-SubCell"/>
</dbReference>
<dbReference type="GO" id="GO:0050525">
    <property type="term" value="F:cutinase activity"/>
    <property type="evidence" value="ECO:0000315"/>
    <property type="project" value="UniProtKB"/>
</dbReference>
<dbReference type="GO" id="GO:0016052">
    <property type="term" value="P:carbohydrate catabolic process"/>
    <property type="evidence" value="ECO:0007669"/>
    <property type="project" value="TreeGrafter"/>
</dbReference>
<dbReference type="GO" id="GO:0044409">
    <property type="term" value="P:symbiont entry into host"/>
    <property type="evidence" value="ECO:0000315"/>
    <property type="project" value="UniProtKB"/>
</dbReference>
<dbReference type="Gene3D" id="3.40.50.1820">
    <property type="entry name" value="alpha/beta hydrolase"/>
    <property type="match status" value="1"/>
</dbReference>
<dbReference type="InterPro" id="IPR029058">
    <property type="entry name" value="AB_hydrolase_fold"/>
</dbReference>
<dbReference type="InterPro" id="IPR000675">
    <property type="entry name" value="Cutinase/axe"/>
</dbReference>
<dbReference type="InterPro" id="IPR043580">
    <property type="entry name" value="CUTINASE_1"/>
</dbReference>
<dbReference type="InterPro" id="IPR011150">
    <property type="entry name" value="Cutinase_monf"/>
</dbReference>
<dbReference type="PANTHER" id="PTHR48250:SF1">
    <property type="entry name" value="CUTINASE"/>
    <property type="match status" value="1"/>
</dbReference>
<dbReference type="PANTHER" id="PTHR48250">
    <property type="entry name" value="CUTINASE 2-RELATED"/>
    <property type="match status" value="1"/>
</dbReference>
<dbReference type="Pfam" id="PF01083">
    <property type="entry name" value="Cutinase"/>
    <property type="match status" value="1"/>
</dbReference>
<dbReference type="PRINTS" id="PR00129">
    <property type="entry name" value="CUTINASE"/>
</dbReference>
<dbReference type="SMART" id="SM01110">
    <property type="entry name" value="Cutinase"/>
    <property type="match status" value="1"/>
</dbReference>
<dbReference type="SUPFAM" id="SSF53474">
    <property type="entry name" value="alpha/beta-Hydrolases"/>
    <property type="match status" value="1"/>
</dbReference>
<dbReference type="PROSITE" id="PS00155">
    <property type="entry name" value="CUTINASE_1"/>
    <property type="match status" value="1"/>
</dbReference>
<organism>
    <name type="scientific">Pyrenopeziza brassicae</name>
    <dbReference type="NCBI Taxonomy" id="76659"/>
    <lineage>
        <taxon>Eukaryota</taxon>
        <taxon>Fungi</taxon>
        <taxon>Dikarya</taxon>
        <taxon>Ascomycota</taxon>
        <taxon>Pezizomycotina</taxon>
        <taxon>Leotiomycetes</taxon>
        <taxon>Helotiales</taxon>
        <taxon>Ploettnerulaceae</taxon>
        <taxon>Pyrenopeziza</taxon>
    </lineage>
</organism>
<comment type="function">
    <text evidence="5 11">Catalyzes the hydrolysis of complex carboxylic polyesters found in the cell wall of plants (Probable) (PubMed:12795380). Degrades cutin, a macromolecule that forms the structure of the plant cuticle (Probable) (PubMed:12795380). Allows pathogenic fungi to penetrate through the cuticular barrier into the host plant during the initial stage of fungal infection (Probable) (PubMed:12795380).</text>
</comment>
<comment type="catalytic activity">
    <reaction evidence="10">
        <text>cutin + H2O = cutin monomers.</text>
        <dbReference type="EC" id="3.1.1.74"/>
    </reaction>
</comment>
<comment type="subcellular location">
    <subcellularLocation>
        <location evidence="2">Secreted</location>
    </subcellularLocation>
</comment>
<comment type="induction">
    <text evidence="5 6">By contact with cutin.</text>
</comment>
<comment type="PTM">
    <text evidence="2">The 2 disulfide bonds play a critical role in holding the catalytic residues in juxta-position; reduction of the disulfide bridges results in the complete inactivation of the enzyme.</text>
</comment>
<comment type="disruption phenotype">
    <text evidence="5">Abolishes penetration of the host cuticle (PubMed:12795380). Abolishes conidiomata formation on the host (PubMed:12795380).</text>
</comment>
<comment type="similarity">
    <text evidence="9">Belongs to the cutinase family.</text>
</comment>
<sequence>MKVTALGNTLTGFGQALATTLGVDTTSSSPNCAEMMVVFARGTSEPGNVGLFSGPTFFDALEVMMGAGAVSVQGVEYGASIEGFLQGGDPAGSAAMAGIVEGTVQNCPNAKIVMSGYSQGGQLVHNAAAMLPAATMAKISSLVIFGDPNDGKPIANADPSKVMVVCHPGHNICDGRDLVLVEHLTYSRDAVEAATFAAARAKA</sequence>
<name>CUTI_PYRBR</name>
<feature type="signal peptide" evidence="3">
    <location>
        <begin position="1"/>
        <end position="18"/>
    </location>
</feature>
<feature type="chain" id="PRO_0000006445" description="Cutinase pbc1">
    <location>
        <begin position="19"/>
        <end position="203"/>
    </location>
</feature>
<feature type="active site" description="Nucleophile" evidence="4">
    <location>
        <position position="118"/>
    </location>
</feature>
<feature type="active site" evidence="4">
    <location>
        <position position="170"/>
    </location>
</feature>
<feature type="active site" description="Proton donor/acceptor" evidence="4">
    <location>
        <position position="183"/>
    </location>
</feature>
<feature type="site" description="Transition state stabilizer" evidence="1">
    <location>
        <position position="119"/>
    </location>
</feature>
<feature type="disulfide bond" evidence="1">
    <location>
        <begin position="32"/>
        <end position="107"/>
    </location>
</feature>
<feature type="disulfide bond" evidence="1">
    <location>
        <begin position="166"/>
        <end position="173"/>
    </location>
</feature>
<evidence type="ECO:0000250" key="1">
    <source>
        <dbReference type="UniProtKB" id="P00590"/>
    </source>
</evidence>
<evidence type="ECO:0000250" key="2">
    <source>
        <dbReference type="UniProtKB" id="P11373"/>
    </source>
</evidence>
<evidence type="ECO:0000255" key="3"/>
<evidence type="ECO:0000255" key="4">
    <source>
        <dbReference type="PROSITE-ProRule" id="PRU10108"/>
    </source>
</evidence>
<evidence type="ECO:0000269" key="5">
    <source>
    </source>
</evidence>
<evidence type="ECO:0000269" key="6">
    <source ref="1"/>
</evidence>
<evidence type="ECO:0000303" key="7">
    <source>
    </source>
</evidence>
<evidence type="ECO:0000303" key="8">
    <source ref="1"/>
</evidence>
<evidence type="ECO:0000305" key="9"/>
<evidence type="ECO:0000305" key="10">
    <source>
    </source>
</evidence>
<evidence type="ECO:0000305" key="11">
    <source ref="1"/>
</evidence>
<gene>
    <name evidence="8" type="primary">pbc1</name>
</gene>
<proteinExistence type="evidence at protein level"/>
<keyword id="KW-1015">Disulfide bond</keyword>
<keyword id="KW-0378">Hydrolase</keyword>
<keyword id="KW-0964">Secreted</keyword>
<keyword id="KW-0719">Serine esterase</keyword>
<keyword id="KW-0732">Signal</keyword>
<keyword id="KW-0843">Virulence</keyword>